<dbReference type="EMBL" id="CP000090">
    <property type="protein sequence ID" value="AAZ60087.1"/>
    <property type="status" value="ALT_INIT"/>
    <property type="molecule type" value="Genomic_DNA"/>
</dbReference>
<dbReference type="SMR" id="Q474U6"/>
<dbReference type="STRING" id="264198.Reut_A0705"/>
<dbReference type="KEGG" id="reu:Reut_A0705"/>
<dbReference type="eggNOG" id="COG1678">
    <property type="taxonomic scope" value="Bacteria"/>
</dbReference>
<dbReference type="HOGENOM" id="CLU_057596_1_0_4"/>
<dbReference type="OrthoDB" id="9807486at2"/>
<dbReference type="GO" id="GO:0005829">
    <property type="term" value="C:cytosol"/>
    <property type="evidence" value="ECO:0007669"/>
    <property type="project" value="TreeGrafter"/>
</dbReference>
<dbReference type="Gene3D" id="3.40.1740.10">
    <property type="entry name" value="VC0467-like"/>
    <property type="match status" value="1"/>
</dbReference>
<dbReference type="HAMAP" id="MF_00758">
    <property type="entry name" value="UPF0301"/>
    <property type="match status" value="1"/>
</dbReference>
<dbReference type="InterPro" id="IPR003774">
    <property type="entry name" value="AlgH-like"/>
</dbReference>
<dbReference type="NCBIfam" id="NF001266">
    <property type="entry name" value="PRK00228.1-1"/>
    <property type="match status" value="1"/>
</dbReference>
<dbReference type="NCBIfam" id="NF001267">
    <property type="entry name" value="PRK00228.1-2"/>
    <property type="match status" value="1"/>
</dbReference>
<dbReference type="PANTHER" id="PTHR30327">
    <property type="entry name" value="UNCHARACTERIZED PROTEIN YQGE"/>
    <property type="match status" value="1"/>
</dbReference>
<dbReference type="PANTHER" id="PTHR30327:SF1">
    <property type="entry name" value="UPF0301 PROTEIN YQGE"/>
    <property type="match status" value="1"/>
</dbReference>
<dbReference type="Pfam" id="PF02622">
    <property type="entry name" value="DUF179"/>
    <property type="match status" value="1"/>
</dbReference>
<dbReference type="SUPFAM" id="SSF143456">
    <property type="entry name" value="VC0467-like"/>
    <property type="match status" value="1"/>
</dbReference>
<comment type="similarity">
    <text evidence="1">Belongs to the UPF0301 (AlgH) family.</text>
</comment>
<comment type="sequence caution" evidence="2">
    <conflict type="erroneous initiation">
        <sequence resource="EMBL-CDS" id="AAZ60087"/>
    </conflict>
</comment>
<name>Y705_CUPPJ</name>
<organism>
    <name type="scientific">Cupriavidus pinatubonensis (strain JMP 134 / LMG 1197)</name>
    <name type="common">Cupriavidus necator (strain JMP 134)</name>
    <dbReference type="NCBI Taxonomy" id="264198"/>
    <lineage>
        <taxon>Bacteria</taxon>
        <taxon>Pseudomonadati</taxon>
        <taxon>Pseudomonadota</taxon>
        <taxon>Betaproteobacteria</taxon>
        <taxon>Burkholderiales</taxon>
        <taxon>Burkholderiaceae</taxon>
        <taxon>Cupriavidus</taxon>
    </lineage>
</organism>
<proteinExistence type="inferred from homology"/>
<protein>
    <recommendedName>
        <fullName evidence="1">UPF0301 protein Reut_A0705</fullName>
    </recommendedName>
</protein>
<evidence type="ECO:0000255" key="1">
    <source>
        <dbReference type="HAMAP-Rule" id="MF_00758"/>
    </source>
</evidence>
<evidence type="ECO:0000305" key="2"/>
<reference key="1">
    <citation type="journal article" date="2010" name="PLoS ONE">
        <title>The complete multipartite genome sequence of Cupriavidus necator JMP134, a versatile pollutant degrader.</title>
        <authorList>
            <person name="Lykidis A."/>
            <person name="Perez-Pantoja D."/>
            <person name="Ledger T."/>
            <person name="Mavromatis K."/>
            <person name="Anderson I.J."/>
            <person name="Ivanova N.N."/>
            <person name="Hooper S.D."/>
            <person name="Lapidus A."/>
            <person name="Lucas S."/>
            <person name="Gonzalez B."/>
            <person name="Kyrpides N.C."/>
        </authorList>
    </citation>
    <scope>NUCLEOTIDE SEQUENCE [LARGE SCALE GENOMIC DNA]</scope>
    <source>
        <strain>JMP134 / LMG 1197</strain>
    </source>
</reference>
<accession>Q474U6</accession>
<feature type="chain" id="PRO_0000258862" description="UPF0301 protein Reut_A0705">
    <location>
        <begin position="1"/>
        <end position="190"/>
    </location>
</feature>
<gene>
    <name type="ordered locus">Reut_A0705</name>
</gene>
<sequence>MAKSEAPINLTNQFLIAMPGMADPTFSGSVVYLCEHNERGALGLVINRPIDIDMATLFDKIDLKLEIQPVAHQPVYFGGPVQTERGFVLHDPVGIYVSSLAVPGGLEMTTSKDVLEAVANGSGPHRFLLTLGYSGWGAGQLEDELSRNGWLTVQADPEIIFSVPPEERFSAAIRLLGIDITMLSGEAGHA</sequence>